<organism>
    <name type="scientific">Pseudomonas entomophila (strain L48)</name>
    <dbReference type="NCBI Taxonomy" id="384676"/>
    <lineage>
        <taxon>Bacteria</taxon>
        <taxon>Pseudomonadati</taxon>
        <taxon>Pseudomonadota</taxon>
        <taxon>Gammaproteobacteria</taxon>
        <taxon>Pseudomonadales</taxon>
        <taxon>Pseudomonadaceae</taxon>
        <taxon>Pseudomonas</taxon>
    </lineage>
</organism>
<gene>
    <name evidence="1" type="primary">mnmC</name>
    <name type="ordered locus">PSEEN1470</name>
</gene>
<name>MNMC_PSEE4</name>
<proteinExistence type="inferred from homology"/>
<protein>
    <recommendedName>
        <fullName evidence="1">tRNA 5-methylaminomethyl-2-thiouridine biosynthesis bifunctional protein MnmC</fullName>
        <shortName evidence="1">tRNA mnm(5)s(2)U biosynthesis bifunctional protein</shortName>
    </recommendedName>
    <domain>
        <recommendedName>
            <fullName evidence="1">tRNA (mnm(5)s(2)U34)-methyltransferase</fullName>
            <ecNumber evidence="1">2.1.1.61</ecNumber>
        </recommendedName>
    </domain>
    <domain>
        <recommendedName>
            <fullName evidence="1">FAD-dependent cmnm(5)s(2)U34 oxidoreductase</fullName>
            <ecNumber evidence="1">1.5.-.-</ecNumber>
        </recommendedName>
    </domain>
</protein>
<reference key="1">
    <citation type="journal article" date="2006" name="Nat. Biotechnol.">
        <title>Complete genome sequence of the entomopathogenic and metabolically versatile soil bacterium Pseudomonas entomophila.</title>
        <authorList>
            <person name="Vodovar N."/>
            <person name="Vallenet D."/>
            <person name="Cruveiller S."/>
            <person name="Rouy Z."/>
            <person name="Barbe V."/>
            <person name="Acosta C."/>
            <person name="Cattolico L."/>
            <person name="Jubin C."/>
            <person name="Lajus A."/>
            <person name="Segurens B."/>
            <person name="Vacherie B."/>
            <person name="Wincker P."/>
            <person name="Weissenbach J."/>
            <person name="Lemaitre B."/>
            <person name="Medigue C."/>
            <person name="Boccard F."/>
        </authorList>
    </citation>
    <scope>NUCLEOTIDE SEQUENCE [LARGE SCALE GENOMIC DNA]</scope>
    <source>
        <strain>L48</strain>
    </source>
</reference>
<evidence type="ECO:0000255" key="1">
    <source>
        <dbReference type="HAMAP-Rule" id="MF_01102"/>
    </source>
</evidence>
<accession>Q1IDB9</accession>
<comment type="function">
    <text evidence="1">Catalyzes the last two steps in the biosynthesis of 5-methylaminomethyl-2-thiouridine (mnm(5)s(2)U) at the wobble position (U34) in tRNA. Catalyzes the FAD-dependent demodification of cmnm(5)s(2)U34 to nm(5)s(2)U34, followed by the transfer of a methyl group from S-adenosyl-L-methionine to nm(5)s(2)U34, to form mnm(5)s(2)U34.</text>
</comment>
<comment type="catalytic activity">
    <reaction evidence="1">
        <text>5-aminomethyl-2-thiouridine(34) in tRNA + S-adenosyl-L-methionine = 5-methylaminomethyl-2-thiouridine(34) in tRNA + S-adenosyl-L-homocysteine + H(+)</text>
        <dbReference type="Rhea" id="RHEA:19569"/>
        <dbReference type="Rhea" id="RHEA-COMP:10195"/>
        <dbReference type="Rhea" id="RHEA-COMP:10197"/>
        <dbReference type="ChEBI" id="CHEBI:15378"/>
        <dbReference type="ChEBI" id="CHEBI:57856"/>
        <dbReference type="ChEBI" id="CHEBI:59789"/>
        <dbReference type="ChEBI" id="CHEBI:74454"/>
        <dbReference type="ChEBI" id="CHEBI:74455"/>
        <dbReference type="EC" id="2.1.1.61"/>
    </reaction>
</comment>
<comment type="cofactor">
    <cofactor evidence="1">
        <name>FAD</name>
        <dbReference type="ChEBI" id="CHEBI:57692"/>
    </cofactor>
</comment>
<comment type="subcellular location">
    <subcellularLocation>
        <location evidence="1">Cytoplasm</location>
    </subcellularLocation>
</comment>
<comment type="similarity">
    <text evidence="1">In the N-terminal section; belongs to the methyltransferase superfamily. tRNA (mnm(5)s(2)U34)-methyltransferase family.</text>
</comment>
<comment type="similarity">
    <text evidence="1">In the C-terminal section; belongs to the DAO family.</text>
</comment>
<dbReference type="EC" id="2.1.1.61" evidence="1"/>
<dbReference type="EC" id="1.5.-.-" evidence="1"/>
<dbReference type="EMBL" id="CT573326">
    <property type="protein sequence ID" value="CAK14340.1"/>
    <property type="molecule type" value="Genomic_DNA"/>
</dbReference>
<dbReference type="RefSeq" id="WP_011532755.1">
    <property type="nucleotide sequence ID" value="NC_008027.1"/>
</dbReference>
<dbReference type="SMR" id="Q1IDB9"/>
<dbReference type="STRING" id="384676.PSEEN1470"/>
<dbReference type="GeneID" id="32804723"/>
<dbReference type="KEGG" id="pen:PSEEN1470"/>
<dbReference type="eggNOG" id="COG0665">
    <property type="taxonomic scope" value="Bacteria"/>
</dbReference>
<dbReference type="eggNOG" id="COG4121">
    <property type="taxonomic scope" value="Bacteria"/>
</dbReference>
<dbReference type="HOGENOM" id="CLU_022427_1_0_6"/>
<dbReference type="OrthoDB" id="9786494at2"/>
<dbReference type="Proteomes" id="UP000000658">
    <property type="component" value="Chromosome"/>
</dbReference>
<dbReference type="GO" id="GO:0005737">
    <property type="term" value="C:cytoplasm"/>
    <property type="evidence" value="ECO:0007669"/>
    <property type="project" value="UniProtKB-SubCell"/>
</dbReference>
<dbReference type="GO" id="GO:0050660">
    <property type="term" value="F:flavin adenine dinucleotide binding"/>
    <property type="evidence" value="ECO:0007669"/>
    <property type="project" value="UniProtKB-UniRule"/>
</dbReference>
<dbReference type="GO" id="GO:0016645">
    <property type="term" value="F:oxidoreductase activity, acting on the CH-NH group of donors"/>
    <property type="evidence" value="ECO:0007669"/>
    <property type="project" value="InterPro"/>
</dbReference>
<dbReference type="GO" id="GO:0004808">
    <property type="term" value="F:tRNA (5-methylaminomethyl-2-thiouridylate)(34)-methyltransferase activity"/>
    <property type="evidence" value="ECO:0007669"/>
    <property type="project" value="UniProtKB-EC"/>
</dbReference>
<dbReference type="GO" id="GO:0032259">
    <property type="term" value="P:methylation"/>
    <property type="evidence" value="ECO:0007669"/>
    <property type="project" value="UniProtKB-KW"/>
</dbReference>
<dbReference type="GO" id="GO:0002098">
    <property type="term" value="P:tRNA wobble uridine modification"/>
    <property type="evidence" value="ECO:0007669"/>
    <property type="project" value="TreeGrafter"/>
</dbReference>
<dbReference type="Gene3D" id="3.30.9.10">
    <property type="entry name" value="D-Amino Acid Oxidase, subunit A, domain 2"/>
    <property type="match status" value="1"/>
</dbReference>
<dbReference type="Gene3D" id="3.50.50.60">
    <property type="entry name" value="FAD/NAD(P)-binding domain"/>
    <property type="match status" value="1"/>
</dbReference>
<dbReference type="Gene3D" id="3.40.50.150">
    <property type="entry name" value="Vaccinia Virus protein VP39"/>
    <property type="match status" value="1"/>
</dbReference>
<dbReference type="HAMAP" id="MF_01102">
    <property type="entry name" value="MnmC"/>
    <property type="match status" value="1"/>
</dbReference>
<dbReference type="InterPro" id="IPR006076">
    <property type="entry name" value="FAD-dep_OxRdtase"/>
</dbReference>
<dbReference type="InterPro" id="IPR036188">
    <property type="entry name" value="FAD/NAD-bd_sf"/>
</dbReference>
<dbReference type="InterPro" id="IPR008471">
    <property type="entry name" value="MnmC-like_methylTransf"/>
</dbReference>
<dbReference type="InterPro" id="IPR029063">
    <property type="entry name" value="SAM-dependent_MTases_sf"/>
</dbReference>
<dbReference type="InterPro" id="IPR023032">
    <property type="entry name" value="tRNA_MAMT_biosynth_bifunc_MnmC"/>
</dbReference>
<dbReference type="InterPro" id="IPR047785">
    <property type="entry name" value="tRNA_MNMC2"/>
</dbReference>
<dbReference type="InterPro" id="IPR017610">
    <property type="entry name" value="tRNA_S-uridine_synth_MnmC_C"/>
</dbReference>
<dbReference type="NCBIfam" id="TIGR03197">
    <property type="entry name" value="MnmC_Cterm"/>
    <property type="match status" value="1"/>
</dbReference>
<dbReference type="NCBIfam" id="NF002481">
    <property type="entry name" value="PRK01747.1-2"/>
    <property type="match status" value="1"/>
</dbReference>
<dbReference type="NCBIfam" id="NF033855">
    <property type="entry name" value="tRNA_MNMC2"/>
    <property type="match status" value="1"/>
</dbReference>
<dbReference type="PANTHER" id="PTHR13847">
    <property type="entry name" value="SARCOSINE DEHYDROGENASE-RELATED"/>
    <property type="match status" value="1"/>
</dbReference>
<dbReference type="PANTHER" id="PTHR13847:SF283">
    <property type="entry name" value="TRNA 5-METHYLAMINOMETHYL-2-THIOURIDINE BIOSYNTHESIS BIFUNCTIONAL PROTEIN MNMC"/>
    <property type="match status" value="1"/>
</dbReference>
<dbReference type="Pfam" id="PF01266">
    <property type="entry name" value="DAO"/>
    <property type="match status" value="1"/>
</dbReference>
<dbReference type="Pfam" id="PF05430">
    <property type="entry name" value="Methyltransf_30"/>
    <property type="match status" value="1"/>
</dbReference>
<dbReference type="SUPFAM" id="SSF54373">
    <property type="entry name" value="FAD-linked reductases, C-terminal domain"/>
    <property type="match status" value="1"/>
</dbReference>
<dbReference type="SUPFAM" id="SSF51905">
    <property type="entry name" value="FAD/NAD(P)-binding domain"/>
    <property type="match status" value="1"/>
</dbReference>
<dbReference type="SUPFAM" id="SSF53335">
    <property type="entry name" value="S-adenosyl-L-methionine-dependent methyltransferases"/>
    <property type="match status" value="1"/>
</dbReference>
<keyword id="KW-0963">Cytoplasm</keyword>
<keyword id="KW-0274">FAD</keyword>
<keyword id="KW-0285">Flavoprotein</keyword>
<keyword id="KW-0489">Methyltransferase</keyword>
<keyword id="KW-0511">Multifunctional enzyme</keyword>
<keyword id="KW-0560">Oxidoreductase</keyword>
<keyword id="KW-0949">S-adenosyl-L-methionine</keyword>
<keyword id="KW-0808">Transferase</keyword>
<keyword id="KW-0819">tRNA processing</keyword>
<sequence>MSTLLQHAQIDWDDQGRPHSRQYDDVYFAINEGIDETLHVFIEQNQLRQRFAELKPHDCLVIGETGFGTGMNFFCAWQLFAELAPAGARLHFVSVEKYPLSRDDLARAMQLWPELAAFTQPLLEQYVAIHPGFQQFSLDGGQVTLNLMIGDALEQLPQLDARIDAWFLDGFAPAKNPDMWTPELFTQLARLSRPGTTLGTFTTTGWVRRSLIEAGFTMKKVPGIGKKWEVMHGVYTGAAAAPAAPWYARPTDLPGPREALVIGAGLAGSATARSLAERGWQVSVLERHAGPAQEASGNPQGVLYLKLSAHGTTLSQMILSGFGYTRRWLEHLQRGQDWDACGVLQLAFDDQEAARQAKLAAAFDESLLQRLEHDQAEAVAGIALASGGLFYPEGGWVHPPALCQAQLGHPNVRLLNHHEVIELRKVDGQWQAWDGERLLASAPLVVLAGAADVRRFPACAELPLKRIRGQITRLPATEASRALRTVVCADGYVAPPRGDEHTLGASFDFHNDDLTPTTAEHQGNLGLLEDISTDLATRLGCAELDAEQLEGRAAFRCTSPDYLPIVGPVADVQAFNTTYAMLAKDARQVPDIACPWLDGLYVNSGHGSRGLITAPLSGELIAAWACGEPLPVPRAVAEACHPNRFALRRLIRGK</sequence>
<feature type="chain" id="PRO_1000065004" description="tRNA 5-methylaminomethyl-2-thiouridine biosynthesis bifunctional protein MnmC">
    <location>
        <begin position="1"/>
        <end position="654"/>
    </location>
</feature>
<feature type="region of interest" description="tRNA (mnm(5)s(2)U34)-methyltransferase">
    <location>
        <begin position="1"/>
        <end position="236"/>
    </location>
</feature>
<feature type="region of interest" description="FAD-dependent cmnm(5)s(2)U34 oxidoreductase">
    <location>
        <begin position="262"/>
        <end position="654"/>
    </location>
</feature>